<gene>
    <name evidence="1" type="primary">ileS</name>
    <name type="ordered locus">ERGA_CDS_05000</name>
</gene>
<evidence type="ECO:0000255" key="1">
    <source>
        <dbReference type="HAMAP-Rule" id="MF_02003"/>
    </source>
</evidence>
<evidence type="ECO:0000305" key="2"/>
<accession>Q5FH91</accession>
<name>SYI_EHRRG</name>
<protein>
    <recommendedName>
        <fullName evidence="1">Isoleucine--tRNA ligase</fullName>
        <ecNumber evidence="1">6.1.1.5</ecNumber>
    </recommendedName>
    <alternativeName>
        <fullName evidence="1">Isoleucyl-tRNA synthetase</fullName>
        <shortName evidence="1">IleRS</shortName>
    </alternativeName>
</protein>
<proteinExistence type="inferred from homology"/>
<organism>
    <name type="scientific">Ehrlichia ruminantium (strain Gardel)</name>
    <dbReference type="NCBI Taxonomy" id="302409"/>
    <lineage>
        <taxon>Bacteria</taxon>
        <taxon>Pseudomonadati</taxon>
        <taxon>Pseudomonadota</taxon>
        <taxon>Alphaproteobacteria</taxon>
        <taxon>Rickettsiales</taxon>
        <taxon>Anaplasmataceae</taxon>
        <taxon>Ehrlichia</taxon>
    </lineage>
</organism>
<feature type="chain" id="PRO_0000098544" description="Isoleucine--tRNA ligase">
    <location>
        <begin position="1"/>
        <end position="1118"/>
    </location>
</feature>
<feature type="short sequence motif" description="'HIGH' region">
    <location>
        <begin position="64"/>
        <end position="74"/>
    </location>
</feature>
<feature type="short sequence motif" description="'KMSKS' region">
    <location>
        <begin position="647"/>
        <end position="651"/>
    </location>
</feature>
<feature type="binding site" evidence="1">
    <location>
        <position position="650"/>
    </location>
    <ligand>
        <name>ATP</name>
        <dbReference type="ChEBI" id="CHEBI:30616"/>
    </ligand>
</feature>
<sequence>MCIVKTLHLITHVMKEYNSQFTEGSDFSLIEEQILEFWKENNIFKKSIENRDEKRRFVFYDGPPFANGLPHYGHLLTGFIKDTVARYKTMAGFRVDRRFGWDCHGLPAEMLAEKELGVSGKLAIEEFGIEKFNNYCRNSVMKFSREWKQYIDRQSRWVDFENDYKTMNLSFMESIMWSFYQLWQKGLIYESIKIVPYSWACQTPLSNFETRIDNAYRQKTSKTVTLAFELLDAPKSLIVDNITAYKILVWTTTPWTLPCNLALAISPNIKYCGAIINKEMYIFSRAYLKNFEDHCKKNNIEYLIHSDDICYLSLEYLSYKPVFNYFIDIKNAFKVLVADFVVEDEGTGIVHMAPGFGEDDFILCKKQGIPDIDDKDTSKLLATICPIDDGGKFTERISDFVNMHVFDTNDQIISILKAKNLCFKTDQYLHNYPHCWRTDTPLIYRAMSSWYVEVTKIKNRMIDLNKDVNWIPSHIRSGQFGKWLENAKDWAISRNRFWGTPLPVWKSDNPNYPRIDVYGSIKKVFDDIKALEEDFDIPIDDLHRPYIDNLVRPNPDDPTGKSMMRRVTDVFDCWFESGSMPYAQLHYPFENKELFENYFPADFITEYVAQTRGWFYTLFVLSTALFDKPPFKNCICHGVVLDTQGQKLSKRLNNYADPMEIFKQYGSDAMRFLMLSHTVSYGGDLLLDKDGVMVRDVIRNVIKPMWNSYNFFTIYADIDKVSARVISDLDEVDNIMDKYIMCECISTIQSIFNAMEEFDQSVGNYGYNIKAACNSIVQFFEVLNNWYIRRCRSRFWSSEITKDKVNAYNTLYTVMYYMVKVSAPFLPAITEAIWQKLNFQEEESVHLSLLPNIEHITLKDEDQKNIQYMKLIINICGCVLSIRNVRNIRVRQPLNKITIYSYNNNNDLFNLPVKYQNILLDEINVKSIVFKSNIEDIASFQLKLNFPELGKRIPEKMKNLISLLKSNQWKVLENGQLMLGIREGEYYILEDNEYTLNLKVHSEFASTITLGPNLLGVLVLDNTLTDELIMEGIARDIVRIIQQSRKDNKFNVSDKIDVVICTQDKMVKNSVQAWYEYIVQQTLSLSLVIHENLDANNVAEYCKTTMKDRNLTLFIKKL</sequence>
<comment type="function">
    <text evidence="1">Catalyzes the attachment of isoleucine to tRNA(Ile). As IleRS can inadvertently accommodate and process structurally similar amino acids such as valine, to avoid such errors it has two additional distinct tRNA(Ile)-dependent editing activities. One activity is designated as 'pretransfer' editing and involves the hydrolysis of activated Val-AMP. The other activity is designated 'posttransfer' editing and involves deacylation of mischarged Val-tRNA(Ile).</text>
</comment>
<comment type="catalytic activity">
    <reaction evidence="1">
        <text>tRNA(Ile) + L-isoleucine + ATP = L-isoleucyl-tRNA(Ile) + AMP + diphosphate</text>
        <dbReference type="Rhea" id="RHEA:11060"/>
        <dbReference type="Rhea" id="RHEA-COMP:9666"/>
        <dbReference type="Rhea" id="RHEA-COMP:9695"/>
        <dbReference type="ChEBI" id="CHEBI:30616"/>
        <dbReference type="ChEBI" id="CHEBI:33019"/>
        <dbReference type="ChEBI" id="CHEBI:58045"/>
        <dbReference type="ChEBI" id="CHEBI:78442"/>
        <dbReference type="ChEBI" id="CHEBI:78528"/>
        <dbReference type="ChEBI" id="CHEBI:456215"/>
        <dbReference type="EC" id="6.1.1.5"/>
    </reaction>
</comment>
<comment type="cofactor">
    <cofactor evidence="1">
        <name>Zn(2+)</name>
        <dbReference type="ChEBI" id="CHEBI:29105"/>
    </cofactor>
</comment>
<comment type="subunit">
    <text evidence="1">Monomer.</text>
</comment>
<comment type="subcellular location">
    <subcellularLocation>
        <location evidence="1">Cytoplasm</location>
    </subcellularLocation>
</comment>
<comment type="domain">
    <text evidence="1">IleRS has two distinct active sites: one for aminoacylation and one for editing. The misactivated valine is translocated from the active site to the editing site, which sterically excludes the correctly activated isoleucine. The single editing site contains two valyl binding pockets, one specific for each substrate (Val-AMP or Val-tRNA(Ile)).</text>
</comment>
<comment type="similarity">
    <text evidence="1">Belongs to the class-I aminoacyl-tRNA synthetase family. IleS type 2 subfamily.</text>
</comment>
<comment type="sequence caution" evidence="2">
    <conflict type="erroneous initiation">
        <sequence resource="EMBL-CDS" id="CAI27952"/>
    </conflict>
</comment>
<keyword id="KW-0030">Aminoacyl-tRNA synthetase</keyword>
<keyword id="KW-0067">ATP-binding</keyword>
<keyword id="KW-0963">Cytoplasm</keyword>
<keyword id="KW-0436">Ligase</keyword>
<keyword id="KW-0479">Metal-binding</keyword>
<keyword id="KW-0547">Nucleotide-binding</keyword>
<keyword id="KW-0648">Protein biosynthesis</keyword>
<keyword id="KW-0862">Zinc</keyword>
<dbReference type="EC" id="6.1.1.5" evidence="1"/>
<dbReference type="EMBL" id="CR925677">
    <property type="protein sequence ID" value="CAI27952.1"/>
    <property type="status" value="ALT_INIT"/>
    <property type="molecule type" value="Genomic_DNA"/>
</dbReference>
<dbReference type="SMR" id="Q5FH91"/>
<dbReference type="KEGG" id="erg:ERGA_CDS_05000"/>
<dbReference type="HOGENOM" id="CLU_001493_1_1_5"/>
<dbReference type="Proteomes" id="UP000000533">
    <property type="component" value="Chromosome"/>
</dbReference>
<dbReference type="GO" id="GO:0005737">
    <property type="term" value="C:cytoplasm"/>
    <property type="evidence" value="ECO:0007669"/>
    <property type="project" value="UniProtKB-SubCell"/>
</dbReference>
<dbReference type="GO" id="GO:0002161">
    <property type="term" value="F:aminoacyl-tRNA deacylase activity"/>
    <property type="evidence" value="ECO:0007669"/>
    <property type="project" value="InterPro"/>
</dbReference>
<dbReference type="GO" id="GO:0005524">
    <property type="term" value="F:ATP binding"/>
    <property type="evidence" value="ECO:0007669"/>
    <property type="project" value="UniProtKB-UniRule"/>
</dbReference>
<dbReference type="GO" id="GO:0004822">
    <property type="term" value="F:isoleucine-tRNA ligase activity"/>
    <property type="evidence" value="ECO:0007669"/>
    <property type="project" value="UniProtKB-UniRule"/>
</dbReference>
<dbReference type="GO" id="GO:0000049">
    <property type="term" value="F:tRNA binding"/>
    <property type="evidence" value="ECO:0007669"/>
    <property type="project" value="InterPro"/>
</dbReference>
<dbReference type="GO" id="GO:0008270">
    <property type="term" value="F:zinc ion binding"/>
    <property type="evidence" value="ECO:0007669"/>
    <property type="project" value="UniProtKB-UniRule"/>
</dbReference>
<dbReference type="GO" id="GO:0006428">
    <property type="term" value="P:isoleucyl-tRNA aminoacylation"/>
    <property type="evidence" value="ECO:0007669"/>
    <property type="project" value="UniProtKB-UniRule"/>
</dbReference>
<dbReference type="CDD" id="cd07961">
    <property type="entry name" value="Anticodon_Ia_Ile_ABEc"/>
    <property type="match status" value="1"/>
</dbReference>
<dbReference type="CDD" id="cd00818">
    <property type="entry name" value="IleRS_core"/>
    <property type="match status" value="1"/>
</dbReference>
<dbReference type="FunFam" id="3.40.50.620:FF:000075">
    <property type="entry name" value="Isoleucine--tRNA ligase"/>
    <property type="match status" value="1"/>
</dbReference>
<dbReference type="FunFam" id="3.40.50.620:FF:000241">
    <property type="entry name" value="Isoleucine--tRNA ligase"/>
    <property type="match status" value="1"/>
</dbReference>
<dbReference type="Gene3D" id="3.40.50.620">
    <property type="entry name" value="HUPs"/>
    <property type="match status" value="2"/>
</dbReference>
<dbReference type="Gene3D" id="1.10.730.10">
    <property type="entry name" value="Isoleucyl-tRNA Synthetase, Domain 1"/>
    <property type="match status" value="1"/>
</dbReference>
<dbReference type="HAMAP" id="MF_02003">
    <property type="entry name" value="Ile_tRNA_synth_type2"/>
    <property type="match status" value="1"/>
</dbReference>
<dbReference type="InterPro" id="IPR001412">
    <property type="entry name" value="aa-tRNA-synth_I_CS"/>
</dbReference>
<dbReference type="InterPro" id="IPR002300">
    <property type="entry name" value="aa-tRNA-synth_Ia"/>
</dbReference>
<dbReference type="InterPro" id="IPR033709">
    <property type="entry name" value="Anticodon_Ile_ABEc"/>
</dbReference>
<dbReference type="InterPro" id="IPR002301">
    <property type="entry name" value="Ile-tRNA-ligase"/>
</dbReference>
<dbReference type="InterPro" id="IPR023586">
    <property type="entry name" value="Ile-tRNA-ligase_type2"/>
</dbReference>
<dbReference type="InterPro" id="IPR013155">
    <property type="entry name" value="M/V/L/I-tRNA-synth_anticd-bd"/>
</dbReference>
<dbReference type="InterPro" id="IPR014729">
    <property type="entry name" value="Rossmann-like_a/b/a_fold"/>
</dbReference>
<dbReference type="InterPro" id="IPR009080">
    <property type="entry name" value="tRNAsynth_Ia_anticodon-bd"/>
</dbReference>
<dbReference type="InterPro" id="IPR009008">
    <property type="entry name" value="Val/Leu/Ile-tRNA-synth_edit"/>
</dbReference>
<dbReference type="NCBIfam" id="TIGR00392">
    <property type="entry name" value="ileS"/>
    <property type="match status" value="1"/>
</dbReference>
<dbReference type="PANTHER" id="PTHR42780:SF1">
    <property type="entry name" value="ISOLEUCINE--TRNA LIGASE, CYTOPLASMIC"/>
    <property type="match status" value="1"/>
</dbReference>
<dbReference type="PANTHER" id="PTHR42780">
    <property type="entry name" value="SOLEUCYL-TRNA SYNTHETASE"/>
    <property type="match status" value="1"/>
</dbReference>
<dbReference type="Pfam" id="PF08264">
    <property type="entry name" value="Anticodon_1"/>
    <property type="match status" value="1"/>
</dbReference>
<dbReference type="Pfam" id="PF19302">
    <property type="entry name" value="DUF5915"/>
    <property type="match status" value="1"/>
</dbReference>
<dbReference type="Pfam" id="PF00133">
    <property type="entry name" value="tRNA-synt_1"/>
    <property type="match status" value="1"/>
</dbReference>
<dbReference type="PRINTS" id="PR00984">
    <property type="entry name" value="TRNASYNTHILE"/>
</dbReference>
<dbReference type="SUPFAM" id="SSF47323">
    <property type="entry name" value="Anticodon-binding domain of a subclass of class I aminoacyl-tRNA synthetases"/>
    <property type="match status" value="1"/>
</dbReference>
<dbReference type="SUPFAM" id="SSF52374">
    <property type="entry name" value="Nucleotidylyl transferase"/>
    <property type="match status" value="1"/>
</dbReference>
<dbReference type="SUPFAM" id="SSF50677">
    <property type="entry name" value="ValRS/IleRS/LeuRS editing domain"/>
    <property type="match status" value="1"/>
</dbReference>
<dbReference type="PROSITE" id="PS00178">
    <property type="entry name" value="AA_TRNA_LIGASE_I"/>
    <property type="match status" value="1"/>
</dbReference>
<reference key="1">
    <citation type="journal article" date="2006" name="J. Bacteriol.">
        <title>Comparative genomic analysis of three strains of Ehrlichia ruminantium reveals an active process of genome size plasticity.</title>
        <authorList>
            <person name="Frutos R."/>
            <person name="Viari A."/>
            <person name="Ferraz C."/>
            <person name="Morgat A."/>
            <person name="Eychenie S."/>
            <person name="Kandassamy Y."/>
            <person name="Chantal I."/>
            <person name="Bensaid A."/>
            <person name="Coissac E."/>
            <person name="Vachiery N."/>
            <person name="Demaille J."/>
            <person name="Martinez D."/>
        </authorList>
    </citation>
    <scope>NUCLEOTIDE SEQUENCE [LARGE SCALE GENOMIC DNA]</scope>
    <source>
        <strain>Gardel</strain>
    </source>
</reference>